<keyword id="KW-0507">mRNA processing</keyword>
<keyword id="KW-0508">mRNA splicing</keyword>
<keyword id="KW-0539">Nucleus</keyword>
<keyword id="KW-1185">Reference proteome</keyword>
<proteinExistence type="evidence at protein level"/>
<name>CWF18_SCHPO</name>
<accession>Q9UU80</accession>
<organism>
    <name type="scientific">Schizosaccharomyces pombe (strain 972 / ATCC 24843)</name>
    <name type="common">Fission yeast</name>
    <dbReference type="NCBI Taxonomy" id="284812"/>
    <lineage>
        <taxon>Eukaryota</taxon>
        <taxon>Fungi</taxon>
        <taxon>Dikarya</taxon>
        <taxon>Ascomycota</taxon>
        <taxon>Taphrinomycotina</taxon>
        <taxon>Schizosaccharomycetes</taxon>
        <taxon>Schizosaccharomycetales</taxon>
        <taxon>Schizosaccharomycetaceae</taxon>
        <taxon>Schizosaccharomyces</taxon>
    </lineage>
</organism>
<evidence type="ECO:0000256" key="1">
    <source>
        <dbReference type="SAM" id="MobiDB-lite"/>
    </source>
</evidence>
<evidence type="ECO:0000269" key="2">
    <source>
    </source>
</evidence>
<evidence type="ECO:0000305" key="3"/>
<reference key="1">
    <citation type="journal article" date="2002" name="Nature">
        <title>The genome sequence of Schizosaccharomyces pombe.</title>
        <authorList>
            <person name="Wood V."/>
            <person name="Gwilliam R."/>
            <person name="Rajandream M.A."/>
            <person name="Lyne M.H."/>
            <person name="Lyne R."/>
            <person name="Stewart A."/>
            <person name="Sgouros J.G."/>
            <person name="Peat N."/>
            <person name="Hayles J."/>
            <person name="Baker S.G."/>
            <person name="Basham D."/>
            <person name="Bowman S."/>
            <person name="Brooks K."/>
            <person name="Brown D."/>
            <person name="Brown S."/>
            <person name="Chillingworth T."/>
            <person name="Churcher C.M."/>
            <person name="Collins M."/>
            <person name="Connor R."/>
            <person name="Cronin A."/>
            <person name="Davis P."/>
            <person name="Feltwell T."/>
            <person name="Fraser A."/>
            <person name="Gentles S."/>
            <person name="Goble A."/>
            <person name="Hamlin N."/>
            <person name="Harris D.E."/>
            <person name="Hidalgo J."/>
            <person name="Hodgson G."/>
            <person name="Holroyd S."/>
            <person name="Hornsby T."/>
            <person name="Howarth S."/>
            <person name="Huckle E.J."/>
            <person name="Hunt S."/>
            <person name="Jagels K."/>
            <person name="James K.D."/>
            <person name="Jones L."/>
            <person name="Jones M."/>
            <person name="Leather S."/>
            <person name="McDonald S."/>
            <person name="McLean J."/>
            <person name="Mooney P."/>
            <person name="Moule S."/>
            <person name="Mungall K.L."/>
            <person name="Murphy L.D."/>
            <person name="Niblett D."/>
            <person name="Odell C."/>
            <person name="Oliver K."/>
            <person name="O'Neil S."/>
            <person name="Pearson D."/>
            <person name="Quail M.A."/>
            <person name="Rabbinowitsch E."/>
            <person name="Rutherford K.M."/>
            <person name="Rutter S."/>
            <person name="Saunders D."/>
            <person name="Seeger K."/>
            <person name="Sharp S."/>
            <person name="Skelton J."/>
            <person name="Simmonds M.N."/>
            <person name="Squares R."/>
            <person name="Squares S."/>
            <person name="Stevens K."/>
            <person name="Taylor K."/>
            <person name="Taylor R.G."/>
            <person name="Tivey A."/>
            <person name="Walsh S.V."/>
            <person name="Warren T."/>
            <person name="Whitehead S."/>
            <person name="Woodward J.R."/>
            <person name="Volckaert G."/>
            <person name="Aert R."/>
            <person name="Robben J."/>
            <person name="Grymonprez B."/>
            <person name="Weltjens I."/>
            <person name="Vanstreels E."/>
            <person name="Rieger M."/>
            <person name="Schaefer M."/>
            <person name="Mueller-Auer S."/>
            <person name="Gabel C."/>
            <person name="Fuchs M."/>
            <person name="Duesterhoeft A."/>
            <person name="Fritzc C."/>
            <person name="Holzer E."/>
            <person name="Moestl D."/>
            <person name="Hilbert H."/>
            <person name="Borzym K."/>
            <person name="Langer I."/>
            <person name="Beck A."/>
            <person name="Lehrach H."/>
            <person name="Reinhardt R."/>
            <person name="Pohl T.M."/>
            <person name="Eger P."/>
            <person name="Zimmermann W."/>
            <person name="Wedler H."/>
            <person name="Wambutt R."/>
            <person name="Purnelle B."/>
            <person name="Goffeau A."/>
            <person name="Cadieu E."/>
            <person name="Dreano S."/>
            <person name="Gloux S."/>
            <person name="Lelaure V."/>
            <person name="Mottier S."/>
            <person name="Galibert F."/>
            <person name="Aves S.J."/>
            <person name="Xiang Z."/>
            <person name="Hunt C."/>
            <person name="Moore K."/>
            <person name="Hurst S.M."/>
            <person name="Lucas M."/>
            <person name="Rochet M."/>
            <person name="Gaillardin C."/>
            <person name="Tallada V.A."/>
            <person name="Garzon A."/>
            <person name="Thode G."/>
            <person name="Daga R.R."/>
            <person name="Cruzado L."/>
            <person name="Jimenez J."/>
            <person name="Sanchez M."/>
            <person name="del Rey F."/>
            <person name="Benito J."/>
            <person name="Dominguez A."/>
            <person name="Revuelta J.L."/>
            <person name="Moreno S."/>
            <person name="Armstrong J."/>
            <person name="Forsburg S.L."/>
            <person name="Cerutti L."/>
            <person name="Lowe T."/>
            <person name="McCombie W.R."/>
            <person name="Paulsen I."/>
            <person name="Potashkin J."/>
            <person name="Shpakovski G.V."/>
            <person name="Ussery D."/>
            <person name="Barrell B.G."/>
            <person name="Nurse P."/>
        </authorList>
    </citation>
    <scope>NUCLEOTIDE SEQUENCE [LARGE SCALE GENOMIC DNA]</scope>
    <source>
        <strain>972 / ATCC 24843</strain>
    </source>
</reference>
<reference key="2">
    <citation type="journal article" date="2002" name="Mol. Cell. Biol.">
        <title>Proteomics analysis reveals stable multiprotein complexes in both fission and budding yeasts containing Myb-related Cdc5p/Cef1p, novel pre-mRNA splicing factors, and snRNAs.</title>
        <authorList>
            <person name="Ohi M.D."/>
            <person name="Link A.J."/>
            <person name="Ren L."/>
            <person name="Jennings J.L."/>
            <person name="McDonald W.H."/>
            <person name="Gould K.L."/>
        </authorList>
    </citation>
    <scope>IDENTIFICATION IN THE CWF COMPLEX</scope>
    <scope>IDENTIFICATION BY MASS SPECTROMETRY</scope>
</reference>
<gene>
    <name type="primary">cwf18</name>
    <name type="ORF">SPCP1E11.07c</name>
</gene>
<protein>
    <recommendedName>
        <fullName>Pre-mRNA-splicing factor cwf18</fullName>
    </recommendedName>
    <alternativeName>
        <fullName>Complexed with cdc5 protein 18</fullName>
    </alternativeName>
</protein>
<sequence>MSSLDEVAESRKQRLAELRKIKQLENKTRDSQEVQKNVIEHRNYDPEVQAPKMGFVEPPNMIESVEALSKEIEEKTKRKIEEQSSVPVEELDLVTLRPKKPTWDLERDLKERMRSLETQNQNAIAFYIQQLISERAHSTEKA</sequence>
<feature type="chain" id="PRO_0000079613" description="Pre-mRNA-splicing factor cwf18">
    <location>
        <begin position="1"/>
        <end position="142"/>
    </location>
</feature>
<feature type="region of interest" description="Disordered" evidence="1">
    <location>
        <begin position="24"/>
        <end position="54"/>
    </location>
</feature>
<feature type="compositionally biased region" description="Basic and acidic residues" evidence="1">
    <location>
        <begin position="24"/>
        <end position="45"/>
    </location>
</feature>
<dbReference type="EMBL" id="CU329672">
    <property type="protein sequence ID" value="CAB54866.1"/>
    <property type="molecule type" value="Genomic_DNA"/>
</dbReference>
<dbReference type="PIR" id="T41686">
    <property type="entry name" value="T41686"/>
</dbReference>
<dbReference type="RefSeq" id="NP_588560.1">
    <property type="nucleotide sequence ID" value="NM_001023547.2"/>
</dbReference>
<dbReference type="SMR" id="Q9UU80"/>
<dbReference type="BioGRID" id="275479">
    <property type="interactions" value="28"/>
</dbReference>
<dbReference type="FunCoup" id="Q9UU80">
    <property type="interactions" value="370"/>
</dbReference>
<dbReference type="IntAct" id="Q9UU80">
    <property type="interactions" value="5"/>
</dbReference>
<dbReference type="STRING" id="284812.Q9UU80"/>
<dbReference type="iPTMnet" id="Q9UU80"/>
<dbReference type="PaxDb" id="4896-SPCP1E11.07c.1"/>
<dbReference type="EnsemblFungi" id="SPCP1E11.07c.1">
    <property type="protein sequence ID" value="SPCP1E11.07c.1:pep"/>
    <property type="gene ID" value="SPCP1E11.07c"/>
</dbReference>
<dbReference type="GeneID" id="2538901"/>
<dbReference type="KEGG" id="spo:2538901"/>
<dbReference type="PomBase" id="SPCP1E11.07c">
    <property type="gene designation" value="cwf18"/>
</dbReference>
<dbReference type="VEuPathDB" id="FungiDB:SPCP1E11.07c"/>
<dbReference type="eggNOG" id="KOG3407">
    <property type="taxonomic scope" value="Eukaryota"/>
</dbReference>
<dbReference type="HOGENOM" id="CLU_091076_0_0_1"/>
<dbReference type="InParanoid" id="Q9UU80"/>
<dbReference type="OMA" id="KPHNETT"/>
<dbReference type="PhylomeDB" id="Q9UU80"/>
<dbReference type="Reactome" id="R-SPO-72163">
    <property type="pathway name" value="mRNA Splicing - Major Pathway"/>
</dbReference>
<dbReference type="PRO" id="PR:Q9UU80"/>
<dbReference type="Proteomes" id="UP000002485">
    <property type="component" value="Chromosome III"/>
</dbReference>
<dbReference type="GO" id="GO:0005829">
    <property type="term" value="C:cytosol"/>
    <property type="evidence" value="ECO:0007005"/>
    <property type="project" value="PomBase"/>
</dbReference>
<dbReference type="GO" id="GO:0005634">
    <property type="term" value="C:nucleus"/>
    <property type="evidence" value="ECO:0007005"/>
    <property type="project" value="PomBase"/>
</dbReference>
<dbReference type="GO" id="GO:0071014">
    <property type="term" value="C:post-mRNA release spliceosomal complex"/>
    <property type="evidence" value="ECO:0000314"/>
    <property type="project" value="PomBase"/>
</dbReference>
<dbReference type="GO" id="GO:0000974">
    <property type="term" value="C:Prp19 complex"/>
    <property type="evidence" value="ECO:0000314"/>
    <property type="project" value="PomBase"/>
</dbReference>
<dbReference type="GO" id="GO:0005681">
    <property type="term" value="C:spliceosomal complex"/>
    <property type="evidence" value="ECO:0000314"/>
    <property type="project" value="PomBase"/>
</dbReference>
<dbReference type="GO" id="GO:0005684">
    <property type="term" value="C:U2-type spliceosomal complex"/>
    <property type="evidence" value="ECO:0000314"/>
    <property type="project" value="PomBase"/>
</dbReference>
<dbReference type="GO" id="GO:0045292">
    <property type="term" value="P:mRNA cis splicing, via spliceosome"/>
    <property type="evidence" value="ECO:0000269"/>
    <property type="project" value="PomBase"/>
</dbReference>
<dbReference type="InterPro" id="IPR013169">
    <property type="entry name" value="mRNA_splic_Cwf18-like"/>
</dbReference>
<dbReference type="PANTHER" id="PTHR31551:SF1">
    <property type="entry name" value="COILED-COIL DOMAIN-CONTAINING PROTEIN 12"/>
    <property type="match status" value="1"/>
</dbReference>
<dbReference type="PANTHER" id="PTHR31551">
    <property type="entry name" value="PRE-MRNA-SPLICING FACTOR CWF18"/>
    <property type="match status" value="1"/>
</dbReference>
<dbReference type="Pfam" id="PF08315">
    <property type="entry name" value="cwf18"/>
    <property type="match status" value="1"/>
</dbReference>
<comment type="function">
    <text>Involved in mRNA splicing where it associates with cdc5 and the other cwf proteins as part of the spliceosome.</text>
</comment>
<comment type="subunit">
    <text evidence="2">Belongs to the 40S cdc5-associated complex (or cwf complex), a spliceosome sub-complex reminiscent of a late-stage spliceosome composed of the U2, U5 and U6 snRNAs and at least brr2, cdc5, cwf2/prp3, cwf3/syf1, cwf4/syf3, cwf5/ecm2, spp42/cwf6, cwf7/spf27, cwf8, cwf9, cwf10, cwf11, cwf12, prp45/cwf13, cwf14, cwf15, cwf16, cwf17, cwf18, cwf19, cwf20, cwf21, cwf22, cwf23, cwf24, cwf25, cwf26, cyp7/cwf27, cwf28, cwf29/ist3, lea1, msl1, prp5/cwf1, prp10, prp12/sap130, prp17, prp22, sap61, sap62, sap114, sap145, slu7, smb1, smd1, smd3, smf1, smg1 and syf2.</text>
</comment>
<comment type="subcellular location">
    <subcellularLocation>
        <location evidence="3">Nucleus</location>
    </subcellularLocation>
</comment>